<proteinExistence type="evidence at protein level"/>
<reference key="1">
    <citation type="journal article" date="2011" name="BMC Plant Biol.">
        <title>Transcriptome mining, functional characterization, and phylogeny of a large terpene synthase gene family in spruce (Picea spp.).</title>
        <authorList>
            <person name="Keeling C.I."/>
            <person name="Weisshaar S."/>
            <person name="Ralph S.G."/>
            <person name="Jancsik S."/>
            <person name="Hamberger B."/>
            <person name="Dullat H.K."/>
            <person name="Bohlmann J."/>
        </authorList>
    </citation>
    <scope>NUCLEOTIDE SEQUENCE [MRNA]</scope>
    <scope>CATALYTIC ACTIVITY</scope>
    <scope>FUNCTION</scope>
    <scope>PATHWAY</scope>
    <scope>GENE FAMILY</scope>
    <source>
        <strain>cv. FB3-425</strain>
    </source>
</reference>
<keyword id="KW-0150">Chloroplast</keyword>
<keyword id="KW-0456">Lyase</keyword>
<keyword id="KW-0460">Magnesium</keyword>
<keyword id="KW-0479">Metal-binding</keyword>
<keyword id="KW-0934">Plastid</keyword>
<keyword id="KW-0809">Transit peptide</keyword>
<gene>
    <name evidence="5" type="primary">TPS-Phel-3</name>
</gene>
<sequence>MAIVSSVPLASKSCLHKSLISSIHKLKPFCRTIPTLGMSRPGKYVMPSMSMSSPVSDDGVQRRTGGYHSNLWNDDIIQFLSTPYGEPAYRERGERLIDEVKNMFNSISMEDVEFSPLNDLIQRLWIVDSVERLGIDRHFKNEIKSTLDYVYSYWTQKGIGCGIESVDPDLNSTALGLRTLRLHGYPVSAEVLKHFQNQNGQFACSPSETEGEMRSIVNLYRASLIAFPGEKVMEEAEIFSTKYLKEALQKIPVSSLSREIGDVLEQDWHTNLPRLEARNYIDVFGQDTKDTKLYMKTEKLLELAKLEFNIFQSLQKTELDSLLRWWKDSGFHHITFSRHLHVEYYTLASCIAIEPQHSRFRLGFAKACHVITILDDMYDVFGTIDELELFTAQIKRWDPSATDCLPKYMKRMYMILYDMVNEMSREAETAQGRDTLNYARQAWEDFIDSYMQEAKWIATGYLPTFDEYFENGKVSSGHRVAALQPILTMDIPFPHDILKEVDFPSKLNDLASAILRLRGDTRCYKADRARGEEASCISCYMKDNPGATEEDALSHINAVISDVIKGLNWELLNPNSSVPISSKKHVFDVSRALHYGYKYRDGYSVSNIETKSLVMRTLLESVPF</sequence>
<comment type="function">
    <text evidence="4">Terpene synthase (TPS) involved in the biosynthesis of monoterpene natural products included in conifer oleoresin secretions and volatile emissions; these compounds contribute to biotic and abiotic stress defense against herbivores and pathogens (PubMed:21385377). Catalyzes the conversion of (2E)-geranyl diphosphate (GPP) to (-)-beta-phellandrene (PubMed:21385377).</text>
</comment>
<comment type="catalytic activity">
    <reaction evidence="4">
        <text>(2E)-geranyl diphosphate = (-)-beta-phellandrene + diphosphate</text>
        <dbReference type="Rhea" id="RHEA:25492"/>
        <dbReference type="ChEBI" id="CHEBI:129"/>
        <dbReference type="ChEBI" id="CHEBI:33019"/>
        <dbReference type="ChEBI" id="CHEBI:58057"/>
        <dbReference type="EC" id="4.2.3.52"/>
    </reaction>
</comment>
<comment type="cofactor">
    <cofactor evidence="1">
        <name>Mg(2+)</name>
        <dbReference type="ChEBI" id="CHEBI:18420"/>
    </cofactor>
    <cofactor evidence="1">
        <name>Mn(2+)</name>
        <dbReference type="ChEBI" id="CHEBI:29035"/>
    </cofactor>
    <text evidence="1">Binds 3 Mg(2+) or Mn(2+) ions per subunit.</text>
</comment>
<comment type="pathway">
    <text evidence="4">Terpene metabolism; oleoresin biosynthesis.</text>
</comment>
<comment type="subcellular location">
    <subcellularLocation>
        <location evidence="3">Plastid</location>
        <location evidence="3">Chloroplast</location>
    </subcellularLocation>
</comment>
<comment type="domain">
    <text evidence="1">The Asp-Asp-Xaa-Xaa-Asp/Glu (DDXXD/E) motif is important for the catalytic activity, presumably through binding to Mg(2+).</text>
</comment>
<comment type="similarity">
    <text evidence="6">Belongs to the terpene synthase family. Tpsd subfamily.</text>
</comment>
<accession>F2XFA5</accession>
<organism>
    <name type="scientific">Picea sitchensis</name>
    <name type="common">Sitka spruce</name>
    <name type="synonym">Pinus sitchensis</name>
    <dbReference type="NCBI Taxonomy" id="3332"/>
    <lineage>
        <taxon>Eukaryota</taxon>
        <taxon>Viridiplantae</taxon>
        <taxon>Streptophyta</taxon>
        <taxon>Embryophyta</taxon>
        <taxon>Tracheophyta</taxon>
        <taxon>Spermatophyta</taxon>
        <taxon>Pinopsida</taxon>
        <taxon>Pinidae</taxon>
        <taxon>Conifers I</taxon>
        <taxon>Pinales</taxon>
        <taxon>Pinaceae</taxon>
        <taxon>Picea</taxon>
    </lineage>
</organism>
<name>BPHS3_PICSI</name>
<dbReference type="EC" id="4.2.3.52" evidence="4"/>
<dbReference type="EMBL" id="HQ426163">
    <property type="protein sequence ID" value="ADZ45505.1"/>
    <property type="molecule type" value="mRNA"/>
</dbReference>
<dbReference type="SMR" id="F2XFA5"/>
<dbReference type="UniPathway" id="UPA00924"/>
<dbReference type="GO" id="GO:0009507">
    <property type="term" value="C:chloroplast"/>
    <property type="evidence" value="ECO:0007669"/>
    <property type="project" value="UniProtKB-SubCell"/>
</dbReference>
<dbReference type="GO" id="GO:0016829">
    <property type="term" value="F:lyase activity"/>
    <property type="evidence" value="ECO:0000314"/>
    <property type="project" value="UniProtKB"/>
</dbReference>
<dbReference type="GO" id="GO:0000287">
    <property type="term" value="F:magnesium ion binding"/>
    <property type="evidence" value="ECO:0007669"/>
    <property type="project" value="InterPro"/>
</dbReference>
<dbReference type="GO" id="GO:0010333">
    <property type="term" value="F:terpene synthase activity"/>
    <property type="evidence" value="ECO:0007669"/>
    <property type="project" value="InterPro"/>
</dbReference>
<dbReference type="GO" id="GO:0016102">
    <property type="term" value="P:diterpenoid biosynthetic process"/>
    <property type="evidence" value="ECO:0007669"/>
    <property type="project" value="InterPro"/>
</dbReference>
<dbReference type="GO" id="GO:0010597">
    <property type="term" value="P:green leaf volatile biosynthetic process"/>
    <property type="evidence" value="ECO:0000314"/>
    <property type="project" value="UniProtKB"/>
</dbReference>
<dbReference type="GO" id="GO:0016099">
    <property type="term" value="P:monoterpenoid biosynthetic process"/>
    <property type="evidence" value="ECO:0000314"/>
    <property type="project" value="UniProtKB"/>
</dbReference>
<dbReference type="CDD" id="cd00684">
    <property type="entry name" value="Terpene_cyclase_plant_C1"/>
    <property type="match status" value="1"/>
</dbReference>
<dbReference type="FunFam" id="1.50.10.130:FF:000004">
    <property type="entry name" value="Carene synthase, chloroplastic"/>
    <property type="match status" value="1"/>
</dbReference>
<dbReference type="FunFam" id="1.10.600.10:FF:000005">
    <property type="entry name" value="Ent-kaur-16-ene synthase, chloroplastic"/>
    <property type="match status" value="1"/>
</dbReference>
<dbReference type="Gene3D" id="1.10.600.10">
    <property type="entry name" value="Farnesyl Diphosphate Synthase"/>
    <property type="match status" value="1"/>
</dbReference>
<dbReference type="Gene3D" id="1.50.10.130">
    <property type="entry name" value="Terpene synthase, N-terminal domain"/>
    <property type="match status" value="1"/>
</dbReference>
<dbReference type="InterPro" id="IPR008949">
    <property type="entry name" value="Isoprenoid_synthase_dom_sf"/>
</dbReference>
<dbReference type="InterPro" id="IPR034741">
    <property type="entry name" value="Terpene_cyclase-like_1_C"/>
</dbReference>
<dbReference type="InterPro" id="IPR044814">
    <property type="entry name" value="Terpene_cyclase_plant_C1"/>
</dbReference>
<dbReference type="InterPro" id="IPR001906">
    <property type="entry name" value="Terpene_synth_N"/>
</dbReference>
<dbReference type="InterPro" id="IPR036965">
    <property type="entry name" value="Terpene_synth_N_sf"/>
</dbReference>
<dbReference type="InterPro" id="IPR050148">
    <property type="entry name" value="Terpene_synthase-like"/>
</dbReference>
<dbReference type="InterPro" id="IPR005630">
    <property type="entry name" value="Terpene_synthase_metal-bd"/>
</dbReference>
<dbReference type="InterPro" id="IPR008930">
    <property type="entry name" value="Terpenoid_cyclase/PrenylTrfase"/>
</dbReference>
<dbReference type="PANTHER" id="PTHR31225">
    <property type="entry name" value="OS04G0344100 PROTEIN-RELATED"/>
    <property type="match status" value="1"/>
</dbReference>
<dbReference type="Pfam" id="PF01397">
    <property type="entry name" value="Terpene_synth"/>
    <property type="match status" value="1"/>
</dbReference>
<dbReference type="Pfam" id="PF03936">
    <property type="entry name" value="Terpene_synth_C"/>
    <property type="match status" value="1"/>
</dbReference>
<dbReference type="SFLD" id="SFLDS00005">
    <property type="entry name" value="Isoprenoid_Synthase_Type_I"/>
    <property type="match status" value="1"/>
</dbReference>
<dbReference type="SFLD" id="SFLDG01019">
    <property type="entry name" value="Terpene_Cyclase_Like_1_C_Termi"/>
    <property type="match status" value="1"/>
</dbReference>
<dbReference type="SFLD" id="SFLDG01014">
    <property type="entry name" value="Terpene_Cyclase_Like_1_N-term"/>
    <property type="match status" value="1"/>
</dbReference>
<dbReference type="SUPFAM" id="SSF48239">
    <property type="entry name" value="Terpenoid cyclases/Protein prenyltransferases"/>
    <property type="match status" value="1"/>
</dbReference>
<dbReference type="SUPFAM" id="SSF48576">
    <property type="entry name" value="Terpenoid synthases"/>
    <property type="match status" value="1"/>
</dbReference>
<evidence type="ECO:0000250" key="1">
    <source>
        <dbReference type="UniProtKB" id="A0A1C9J6A7"/>
    </source>
</evidence>
<evidence type="ECO:0000250" key="2">
    <source>
        <dbReference type="UniProtKB" id="Q40577"/>
    </source>
</evidence>
<evidence type="ECO:0000255" key="3"/>
<evidence type="ECO:0000269" key="4">
    <source>
    </source>
</evidence>
<evidence type="ECO:0000303" key="5">
    <source>
    </source>
</evidence>
<evidence type="ECO:0000305" key="6"/>
<protein>
    <recommendedName>
        <fullName evidence="5">(-)-beta-phellandrene synthase 3, chloroplastic</fullName>
        <ecNumber evidence="4">4.2.3.52</ecNumber>
    </recommendedName>
    <alternativeName>
        <fullName evidence="5">Terpene synthase TPS-Phel-3</fullName>
        <shortName evidence="5">PsTPS-Phel-3</shortName>
    </alternativeName>
</protein>
<feature type="transit peptide" description="Chloroplast" evidence="3">
    <location>
        <begin position="1"/>
        <end position="48"/>
    </location>
</feature>
<feature type="chain" id="PRO_0000454406" description="(-)-beta-phellandrene synthase 3, chloroplastic">
    <location>
        <begin position="49"/>
        <end position="624"/>
    </location>
</feature>
<feature type="short sequence motif" description="DDXXD motif" evidence="1">
    <location>
        <begin position="375"/>
        <end position="379"/>
    </location>
</feature>
<feature type="binding site" evidence="2">
    <location>
        <position position="375"/>
    </location>
    <ligand>
        <name>Mg(2+)</name>
        <dbReference type="ChEBI" id="CHEBI:18420"/>
        <label>1</label>
    </ligand>
</feature>
<feature type="binding site" evidence="2">
    <location>
        <position position="375"/>
    </location>
    <ligand>
        <name>Mg(2+)</name>
        <dbReference type="ChEBI" id="CHEBI:18420"/>
        <label>2</label>
    </ligand>
</feature>
<feature type="binding site" evidence="2">
    <location>
        <position position="379"/>
    </location>
    <ligand>
        <name>Mg(2+)</name>
        <dbReference type="ChEBI" id="CHEBI:18420"/>
        <label>1</label>
    </ligand>
</feature>
<feature type="binding site" evidence="2">
    <location>
        <position position="379"/>
    </location>
    <ligand>
        <name>Mg(2+)</name>
        <dbReference type="ChEBI" id="CHEBI:18420"/>
        <label>2</label>
    </ligand>
</feature>
<feature type="binding site" evidence="2">
    <location>
        <position position="527"/>
    </location>
    <ligand>
        <name>Mg(2+)</name>
        <dbReference type="ChEBI" id="CHEBI:18420"/>
        <label>3</label>
    </ligand>
</feature>